<gene>
    <name type="primary">KERA</name>
</gene>
<keyword id="KW-1015">Disulfide bond</keyword>
<keyword id="KW-0272">Extracellular matrix</keyword>
<keyword id="KW-0325">Glycoprotein</keyword>
<keyword id="KW-0433">Leucine-rich repeat</keyword>
<keyword id="KW-0654">Proteoglycan</keyword>
<keyword id="KW-1185">Reference proteome</keyword>
<keyword id="KW-0677">Repeat</keyword>
<keyword id="KW-0964">Secreted</keyword>
<keyword id="KW-0732">Signal</keyword>
<protein>
    <recommendedName>
        <fullName>Keratocan</fullName>
        <shortName>KTN</shortName>
    </recommendedName>
    <alternativeName>
        <fullName>Keratan sulfate proteoglycan keratocan</fullName>
    </alternativeName>
</protein>
<name>KERA_COTJA</name>
<proteinExistence type="evidence at transcript level"/>
<sequence length="353" mass="40280">MMTLKVCPSLLLLFLVHSVWTRTVRQVYNELDPEHWSHYTFECPQECFCPPSFPNALYCDNKGLKEIPAIPARIWYLYLQNNLIETISEKPFVNATHLRWINLNKNKITNNGIESGVLSKLKRLLYLFLEDNELEEVPAPLPVGLEQLRLARNKISRIPEGVFSNLENLTMLDLHQNNLLDSALQSDTFQGLNSLMQLNIAKNSLKKMPLSIPANTLQLFLDNNSIEVIPENYFSAIPKVTFLRLNYNKLSDEGIPPNGFNVSSILDLQLSHNQLTKIPPINAHLEHLHLDHNRIKSVNGTQICPVSIAVAEDYGLYGNIPRLRYLRLDGNEIQPPIPLDIMICFQLLQAVVI</sequence>
<dbReference type="EMBL" id="AF128223">
    <property type="protein sequence ID" value="AAG48156.1"/>
    <property type="molecule type" value="mRNA"/>
</dbReference>
<dbReference type="RefSeq" id="NP_001310134.1">
    <property type="nucleotide sequence ID" value="NM_001323205.1"/>
</dbReference>
<dbReference type="RefSeq" id="XP_015713487.1">
    <property type="nucleotide sequence ID" value="XM_015858001.2"/>
</dbReference>
<dbReference type="SMR" id="Q9DE66"/>
<dbReference type="GlyCosmos" id="Q9DE66">
    <property type="glycosylation" value="5 sites, No reported glycans"/>
</dbReference>
<dbReference type="Ensembl" id="ENSCJPT00005008302.1">
    <property type="protein sequence ID" value="ENSCJPP00005005059.1"/>
    <property type="gene ID" value="ENSCJPG00005004896.1"/>
</dbReference>
<dbReference type="Ensembl" id="ENSCJPT00005008303.1">
    <property type="protein sequence ID" value="ENSCJPP00005005060.1"/>
    <property type="gene ID" value="ENSCJPG00005004896.1"/>
</dbReference>
<dbReference type="GeneID" id="107311475"/>
<dbReference type="KEGG" id="cjo:107311475"/>
<dbReference type="CTD" id="11081"/>
<dbReference type="GeneTree" id="ENSGT00940000158968"/>
<dbReference type="OrthoDB" id="5789657at2759"/>
<dbReference type="Proteomes" id="UP000694412">
    <property type="component" value="Chromosome 1"/>
</dbReference>
<dbReference type="GO" id="GO:0005615">
    <property type="term" value="C:extracellular space"/>
    <property type="evidence" value="ECO:0007669"/>
    <property type="project" value="TreeGrafter"/>
</dbReference>
<dbReference type="GO" id="GO:0061303">
    <property type="term" value="P:cornea development in camera-type eye"/>
    <property type="evidence" value="ECO:0007669"/>
    <property type="project" value="Ensembl"/>
</dbReference>
<dbReference type="FunFam" id="3.80.10.10:FF:000092">
    <property type="entry name" value="keratocan isoform X1"/>
    <property type="match status" value="1"/>
</dbReference>
<dbReference type="FunFam" id="3.80.10.10:FF:000133">
    <property type="entry name" value="prolargin"/>
    <property type="match status" value="1"/>
</dbReference>
<dbReference type="Gene3D" id="3.80.10.10">
    <property type="entry name" value="Ribonuclease Inhibitor"/>
    <property type="match status" value="3"/>
</dbReference>
<dbReference type="InterPro" id="IPR001611">
    <property type="entry name" value="Leu-rich_rpt"/>
</dbReference>
<dbReference type="InterPro" id="IPR003591">
    <property type="entry name" value="Leu-rich_rpt_typical-subtyp"/>
</dbReference>
<dbReference type="InterPro" id="IPR032675">
    <property type="entry name" value="LRR_dom_sf"/>
</dbReference>
<dbReference type="InterPro" id="IPR000372">
    <property type="entry name" value="LRRNT"/>
</dbReference>
<dbReference type="InterPro" id="IPR050333">
    <property type="entry name" value="SLRP"/>
</dbReference>
<dbReference type="PANTHER" id="PTHR45712">
    <property type="entry name" value="AGAP008170-PA"/>
    <property type="match status" value="1"/>
</dbReference>
<dbReference type="PANTHER" id="PTHR45712:SF13">
    <property type="entry name" value="KERATOCAN"/>
    <property type="match status" value="1"/>
</dbReference>
<dbReference type="Pfam" id="PF13516">
    <property type="entry name" value="LRR_6"/>
    <property type="match status" value="2"/>
</dbReference>
<dbReference type="Pfam" id="PF13855">
    <property type="entry name" value="LRR_8"/>
    <property type="match status" value="1"/>
</dbReference>
<dbReference type="Pfam" id="PF01462">
    <property type="entry name" value="LRRNT"/>
    <property type="match status" value="1"/>
</dbReference>
<dbReference type="SMART" id="SM00364">
    <property type="entry name" value="LRR_BAC"/>
    <property type="match status" value="6"/>
</dbReference>
<dbReference type="SMART" id="SM00369">
    <property type="entry name" value="LRR_TYP"/>
    <property type="match status" value="5"/>
</dbReference>
<dbReference type="SMART" id="SM00013">
    <property type="entry name" value="LRRNT"/>
    <property type="match status" value="1"/>
</dbReference>
<dbReference type="SUPFAM" id="SSF52058">
    <property type="entry name" value="L domain-like"/>
    <property type="match status" value="1"/>
</dbReference>
<dbReference type="PROSITE" id="PS51450">
    <property type="entry name" value="LRR"/>
    <property type="match status" value="10"/>
</dbReference>
<reference key="1">
    <citation type="journal article" date="2000" name="Matrix Biol.">
        <title>Molecular cloning and relative tissue expression of keratocan and mimecan in embryonic quail cornea.</title>
        <authorList>
            <person name="Corpuz L.M."/>
            <person name="Dunlevy J.R."/>
            <person name="Hassell J.R."/>
            <person name="Conrad A.H."/>
            <person name="Conrad G.W."/>
        </authorList>
    </citation>
    <scope>NUCLEOTIDE SEQUENCE [MRNA]</scope>
    <source>
        <tissue>Cornea</tissue>
        <tissue>Sclera</tissue>
    </source>
</reference>
<feature type="signal peptide" evidence="3">
    <location>
        <begin position="1"/>
        <end position="21"/>
    </location>
</feature>
<feature type="chain" id="PRO_0000032751" description="Keratocan">
    <location>
        <begin position="22"/>
        <end position="353"/>
    </location>
</feature>
<feature type="domain" description="LRRNT">
    <location>
        <begin position="34"/>
        <end position="72"/>
    </location>
</feature>
<feature type="repeat" description="LRR 1">
    <location>
        <begin position="73"/>
        <end position="94"/>
    </location>
</feature>
<feature type="repeat" description="LRR 2">
    <location>
        <begin position="97"/>
        <end position="118"/>
    </location>
</feature>
<feature type="repeat" description="LRR 3">
    <location>
        <begin position="123"/>
        <end position="143"/>
    </location>
</feature>
<feature type="repeat" description="LRR 4">
    <location>
        <begin position="144"/>
        <end position="165"/>
    </location>
</feature>
<feature type="repeat" description="LRR 5">
    <location>
        <begin position="168"/>
        <end position="188"/>
    </location>
</feature>
<feature type="repeat" description="LRR 6">
    <location>
        <begin position="194"/>
        <end position="214"/>
    </location>
</feature>
<feature type="repeat" description="LRR 7">
    <location>
        <begin position="215"/>
        <end position="236"/>
    </location>
</feature>
<feature type="repeat" description="LRR 8">
    <location>
        <begin position="239"/>
        <end position="259"/>
    </location>
</feature>
<feature type="repeat" description="LRR 9">
    <location>
        <begin position="264"/>
        <end position="283"/>
    </location>
</feature>
<feature type="repeat" description="LRR 10">
    <location>
        <begin position="284"/>
        <end position="305"/>
    </location>
</feature>
<feature type="glycosylation site" description="N-linked (GlcNAc...) (keratan sulfate) asparagine" evidence="1">
    <location>
        <position position="94"/>
    </location>
</feature>
<feature type="glycosylation site" description="N-linked (GlcNAc...) asparagine" evidence="3">
    <location>
        <position position="168"/>
    </location>
</feature>
<feature type="glycosylation site" description="N-linked (GlcNAc...) (keratan sulfate) asparagine" evidence="1">
    <location>
        <position position="223"/>
    </location>
</feature>
<feature type="glycosylation site" description="N-linked (GlcNAc...) (keratan sulfate) asparagine" evidence="1">
    <location>
        <position position="261"/>
    </location>
</feature>
<feature type="glycosylation site" description="N-linked (GlcNAc...) asparagine" evidence="3">
    <location>
        <position position="299"/>
    </location>
</feature>
<feature type="disulfide bond" evidence="2">
    <location>
        <begin position="43"/>
        <end position="49"/>
    </location>
</feature>
<feature type="disulfide bond" evidence="2">
    <location>
        <begin position="47"/>
        <end position="59"/>
    </location>
</feature>
<feature type="disulfide bond" evidence="2">
    <location>
        <begin position="304"/>
        <end position="344"/>
    </location>
</feature>
<organism>
    <name type="scientific">Coturnix japonica</name>
    <name type="common">Japanese quail</name>
    <name type="synonym">Coturnix coturnix japonica</name>
    <dbReference type="NCBI Taxonomy" id="93934"/>
    <lineage>
        <taxon>Eukaryota</taxon>
        <taxon>Metazoa</taxon>
        <taxon>Chordata</taxon>
        <taxon>Craniata</taxon>
        <taxon>Vertebrata</taxon>
        <taxon>Euteleostomi</taxon>
        <taxon>Archelosauria</taxon>
        <taxon>Archosauria</taxon>
        <taxon>Dinosauria</taxon>
        <taxon>Saurischia</taxon>
        <taxon>Theropoda</taxon>
        <taxon>Coelurosauria</taxon>
        <taxon>Aves</taxon>
        <taxon>Neognathae</taxon>
        <taxon>Galloanserae</taxon>
        <taxon>Galliformes</taxon>
        <taxon>Phasianidae</taxon>
        <taxon>Perdicinae</taxon>
        <taxon>Coturnix</taxon>
    </lineage>
</organism>
<comment type="function">
    <text evidence="1">Plays an important role in generating and maintaining a transparent matrix within the corneal stroma.</text>
</comment>
<comment type="subcellular location">
    <subcellularLocation>
        <location evidence="1">Secreted</location>
        <location evidence="1">Extracellular space</location>
        <location evidence="1">Extracellular matrix</location>
    </subcellularLocation>
</comment>
<comment type="tissue specificity">
    <text>Cornea.</text>
</comment>
<comment type="similarity">
    <text evidence="4">Belongs to the small leucine-rich proteoglycan (SLRP) family. SLRP class II subfamily.</text>
</comment>
<evidence type="ECO:0000250" key="1"/>
<evidence type="ECO:0000250" key="2">
    <source>
        <dbReference type="UniProtKB" id="P21793"/>
    </source>
</evidence>
<evidence type="ECO:0000255" key="3"/>
<evidence type="ECO:0000305" key="4"/>
<accession>Q9DE66</accession>